<name>MAST1_POLRT</name>
<comment type="function">
    <text evidence="1 2 3">Mast cell degranulating peptide with high potency of histamine release (EC(50)=0.09 uM on rat mast cells). Also shows high hemolytic activity (24% sheep erythrocytes lysis at 50 mM) (PubMed:17142988). Its mast cell degranulation activity may be related to the activation of G-protein coupled receptors in mast cells as well as interaction with other proteins located in cell endosomal membranes in the mast cells (By similarity).</text>
</comment>
<comment type="subcellular location">
    <subcellularLocation>
        <location evidence="3">Secreted</location>
    </subcellularLocation>
    <subcellularLocation>
        <location evidence="5">Target cell membrane</location>
    </subcellularLocation>
    <text evidence="6">Has an amphipathic alpha-helical conformation.</text>
</comment>
<comment type="tissue specificity">
    <text evidence="6">Expressed by the venom gland.</text>
</comment>
<comment type="mass spectrometry"/>
<comment type="similarity">
    <text evidence="5">Belongs to the MCD family. Mastoparan subfamily.</text>
</comment>
<proteinExistence type="evidence at protein level"/>
<reference key="1">
    <citation type="journal article" date="2006" name="Biol. Pharm. Bull.">
        <title>Novel biologically active peptides from the venom of Polistes rothneyi iwatai.</title>
        <authorList>
            <person name="Murata K."/>
            <person name="Shinada T."/>
            <person name="Ohfune Y."/>
            <person name="Hisada M."/>
            <person name="Yasuda A."/>
            <person name="Naoki H."/>
            <person name="Nakajima T."/>
        </authorList>
    </citation>
    <scope>PROTEIN SEQUENCE</scope>
    <scope>FUNCTION</scope>
    <scope>SUBCELLULAR LOCATION</scope>
    <scope>AMIDATION AT ILE-14</scope>
    <scope>MASS SPECTROMETRY</scope>
    <source>
        <strain>Subsp. iwatai</strain>
        <tissue>Venom</tissue>
    </source>
</reference>
<sequence>INWLKLGKKILGAI</sequence>
<evidence type="ECO:0000250" key="1">
    <source>
        <dbReference type="UniProtKB" id="P01514"/>
    </source>
</evidence>
<evidence type="ECO:0000250" key="2">
    <source>
        <dbReference type="UniProtKB" id="P84914"/>
    </source>
</evidence>
<evidence type="ECO:0000269" key="3">
    <source>
    </source>
</evidence>
<evidence type="ECO:0000303" key="4">
    <source>
    </source>
</evidence>
<evidence type="ECO:0000305" key="5"/>
<evidence type="ECO:0000305" key="6">
    <source>
    </source>
</evidence>
<organism>
    <name type="scientific">Polistes rothneyi</name>
    <name type="common">Rothney's paper wasp</name>
    <dbReference type="NCBI Taxonomy" id="30208"/>
    <lineage>
        <taxon>Eukaryota</taxon>
        <taxon>Metazoa</taxon>
        <taxon>Ecdysozoa</taxon>
        <taxon>Arthropoda</taxon>
        <taxon>Hexapoda</taxon>
        <taxon>Insecta</taxon>
        <taxon>Pterygota</taxon>
        <taxon>Neoptera</taxon>
        <taxon>Endopterygota</taxon>
        <taxon>Hymenoptera</taxon>
        <taxon>Apocrita</taxon>
        <taxon>Aculeata</taxon>
        <taxon>Vespoidea</taxon>
        <taxon>Vespidae</taxon>
        <taxon>Polistinae</taxon>
        <taxon>Polistini</taxon>
        <taxon>Polistes</taxon>
    </lineage>
</organism>
<dbReference type="GO" id="GO:0005576">
    <property type="term" value="C:extracellular region"/>
    <property type="evidence" value="ECO:0007669"/>
    <property type="project" value="UniProtKB-SubCell"/>
</dbReference>
<dbReference type="GO" id="GO:0016020">
    <property type="term" value="C:membrane"/>
    <property type="evidence" value="ECO:0007669"/>
    <property type="project" value="UniProtKB-KW"/>
</dbReference>
<dbReference type="GO" id="GO:0044218">
    <property type="term" value="C:other organism cell membrane"/>
    <property type="evidence" value="ECO:0007669"/>
    <property type="project" value="UniProtKB-KW"/>
</dbReference>
<dbReference type="GO" id="GO:0090729">
    <property type="term" value="F:toxin activity"/>
    <property type="evidence" value="ECO:0007669"/>
    <property type="project" value="UniProtKB-KW"/>
</dbReference>
<dbReference type="GO" id="GO:0031640">
    <property type="term" value="P:killing of cells of another organism"/>
    <property type="evidence" value="ECO:0007669"/>
    <property type="project" value="UniProtKB-KW"/>
</dbReference>
<protein>
    <recommendedName>
        <fullName evidence="4">Polistes mastoparan-R1</fullName>
        <shortName evidence="4">Pm-R1</shortName>
    </recommendedName>
</protein>
<accession>P0DX35</accession>
<feature type="peptide" id="PRO_0000458780" description="Polistes mastoparan-R1" evidence="3">
    <location>
        <begin position="1"/>
        <end position="14"/>
    </location>
</feature>
<feature type="modified residue" description="Isoleucine amide" evidence="3">
    <location>
        <position position="14"/>
    </location>
</feature>
<keyword id="KW-0027">Amidation</keyword>
<keyword id="KW-0204">Cytolysis</keyword>
<keyword id="KW-0903">Direct protein sequencing</keyword>
<keyword id="KW-1213">G-protein coupled receptor impairing toxin</keyword>
<keyword id="KW-0467">Mast cell degranulation</keyword>
<keyword id="KW-0472">Membrane</keyword>
<keyword id="KW-0964">Secreted</keyword>
<keyword id="KW-1052">Target cell membrane</keyword>
<keyword id="KW-1053">Target membrane</keyword>
<keyword id="KW-0800">Toxin</keyword>